<gene>
    <name evidence="1" type="primary">rlmI</name>
    <name type="ordered locus">VC_1354</name>
</gene>
<name>RLMI_VIBCH</name>
<comment type="function">
    <text evidence="1">Specifically methylates the cytosine at position 1962 (m5C1962) of 23S rRNA.</text>
</comment>
<comment type="catalytic activity">
    <reaction evidence="1">
        <text>cytidine(1962) in 23S rRNA + S-adenosyl-L-methionine = 5-methylcytidine(1962) in 23S rRNA + S-adenosyl-L-homocysteine + H(+)</text>
        <dbReference type="Rhea" id="RHEA:42912"/>
        <dbReference type="Rhea" id="RHEA-COMP:10382"/>
        <dbReference type="Rhea" id="RHEA-COMP:10386"/>
        <dbReference type="ChEBI" id="CHEBI:15378"/>
        <dbReference type="ChEBI" id="CHEBI:57856"/>
        <dbReference type="ChEBI" id="CHEBI:59789"/>
        <dbReference type="ChEBI" id="CHEBI:74483"/>
        <dbReference type="ChEBI" id="CHEBI:82748"/>
        <dbReference type="EC" id="2.1.1.191"/>
    </reaction>
</comment>
<comment type="subcellular location">
    <subcellularLocation>
        <location evidence="1">Cytoplasm</location>
    </subcellularLocation>
</comment>
<comment type="similarity">
    <text evidence="1">Belongs to the methyltransferase superfamily. RlmI family.</text>
</comment>
<comment type="sequence caution" evidence="2">
    <conflict type="erroneous initiation">
        <sequence resource="EMBL-CDS" id="AAF94512"/>
    </conflict>
</comment>
<protein>
    <recommendedName>
        <fullName evidence="1">Ribosomal RNA large subunit methyltransferase I</fullName>
        <ecNumber evidence="1">2.1.1.191</ecNumber>
    </recommendedName>
    <alternativeName>
        <fullName evidence="1">23S rRNA m5C1962 methyltransferase</fullName>
    </alternativeName>
    <alternativeName>
        <fullName evidence="1">rRNA (cytosine-C(5)-)-methyltransferase RlmI</fullName>
    </alternativeName>
</protein>
<dbReference type="EC" id="2.1.1.191" evidence="1"/>
<dbReference type="EMBL" id="AE003852">
    <property type="protein sequence ID" value="AAF94512.1"/>
    <property type="status" value="ALT_INIT"/>
    <property type="molecule type" value="Genomic_DNA"/>
</dbReference>
<dbReference type="PIR" id="H82209">
    <property type="entry name" value="H82209"/>
</dbReference>
<dbReference type="RefSeq" id="NP_230998.2">
    <property type="nucleotide sequence ID" value="NC_002505.1"/>
</dbReference>
<dbReference type="RefSeq" id="WP_000186581.1">
    <property type="nucleotide sequence ID" value="NZ_LT906614.1"/>
</dbReference>
<dbReference type="SMR" id="Q9KSA5"/>
<dbReference type="STRING" id="243277.VC_1354"/>
<dbReference type="DNASU" id="2614808"/>
<dbReference type="EnsemblBacteria" id="AAF94512">
    <property type="protein sequence ID" value="AAF94512"/>
    <property type="gene ID" value="VC_1354"/>
</dbReference>
<dbReference type="KEGG" id="vch:VC_1354"/>
<dbReference type="PATRIC" id="fig|243277.26.peg.1289"/>
<dbReference type="eggNOG" id="COG1092">
    <property type="taxonomic scope" value="Bacteria"/>
</dbReference>
<dbReference type="HOGENOM" id="CLU_014042_0_0_6"/>
<dbReference type="Proteomes" id="UP000000584">
    <property type="component" value="Chromosome 1"/>
</dbReference>
<dbReference type="GO" id="GO:0005737">
    <property type="term" value="C:cytoplasm"/>
    <property type="evidence" value="ECO:0007669"/>
    <property type="project" value="UniProtKB-SubCell"/>
</dbReference>
<dbReference type="GO" id="GO:0003723">
    <property type="term" value="F:RNA binding"/>
    <property type="evidence" value="ECO:0007669"/>
    <property type="project" value="UniProtKB-KW"/>
</dbReference>
<dbReference type="GO" id="GO:0016434">
    <property type="term" value="F:rRNA (cytosine) methyltransferase activity"/>
    <property type="evidence" value="ECO:0007669"/>
    <property type="project" value="UniProtKB-UniRule"/>
</dbReference>
<dbReference type="CDD" id="cd02440">
    <property type="entry name" value="AdoMet_MTases"/>
    <property type="match status" value="1"/>
</dbReference>
<dbReference type="CDD" id="cd21153">
    <property type="entry name" value="PUA_RlmI"/>
    <property type="match status" value="1"/>
</dbReference>
<dbReference type="CDD" id="cd11572">
    <property type="entry name" value="RlmI_M_like"/>
    <property type="match status" value="1"/>
</dbReference>
<dbReference type="Gene3D" id="2.30.130.10">
    <property type="entry name" value="PUA domain"/>
    <property type="match status" value="1"/>
</dbReference>
<dbReference type="Gene3D" id="3.30.750.80">
    <property type="entry name" value="RNA methyltransferase domain (HRMD) like"/>
    <property type="match status" value="1"/>
</dbReference>
<dbReference type="Gene3D" id="3.40.50.150">
    <property type="entry name" value="Vaccinia Virus protein VP39"/>
    <property type="match status" value="1"/>
</dbReference>
<dbReference type="HAMAP" id="MF_01857">
    <property type="entry name" value="23SrRNA_methyltr_I"/>
    <property type="match status" value="1"/>
</dbReference>
<dbReference type="InterPro" id="IPR002478">
    <property type="entry name" value="PUA"/>
</dbReference>
<dbReference type="InterPro" id="IPR015947">
    <property type="entry name" value="PUA-like_sf"/>
</dbReference>
<dbReference type="InterPro" id="IPR036974">
    <property type="entry name" value="PUA_sf"/>
</dbReference>
<dbReference type="InterPro" id="IPR023542">
    <property type="entry name" value="RLMI"/>
</dbReference>
<dbReference type="InterPro" id="IPR041532">
    <property type="entry name" value="RlmI-like_PUA"/>
</dbReference>
<dbReference type="InterPro" id="IPR019614">
    <property type="entry name" value="SAM-dep_methyl-trfase"/>
</dbReference>
<dbReference type="InterPro" id="IPR029063">
    <property type="entry name" value="SAM-dependent_MTases_sf"/>
</dbReference>
<dbReference type="PANTHER" id="PTHR42873">
    <property type="entry name" value="RIBOSOMAL RNA LARGE SUBUNIT METHYLTRANSFERASE"/>
    <property type="match status" value="1"/>
</dbReference>
<dbReference type="PANTHER" id="PTHR42873:SF1">
    <property type="entry name" value="S-ADENOSYLMETHIONINE-DEPENDENT METHYLTRANSFERASE DOMAIN-CONTAINING PROTEIN"/>
    <property type="match status" value="1"/>
</dbReference>
<dbReference type="Pfam" id="PF10672">
    <property type="entry name" value="Methyltrans_SAM"/>
    <property type="match status" value="1"/>
</dbReference>
<dbReference type="Pfam" id="PF17785">
    <property type="entry name" value="PUA_3"/>
    <property type="match status" value="1"/>
</dbReference>
<dbReference type="SMART" id="SM00359">
    <property type="entry name" value="PUA"/>
    <property type="match status" value="1"/>
</dbReference>
<dbReference type="SUPFAM" id="SSF88697">
    <property type="entry name" value="PUA domain-like"/>
    <property type="match status" value="1"/>
</dbReference>
<dbReference type="SUPFAM" id="SSF53335">
    <property type="entry name" value="S-adenosyl-L-methionine-dependent methyltransferases"/>
    <property type="match status" value="1"/>
</dbReference>
<dbReference type="PROSITE" id="PS50890">
    <property type="entry name" value="PUA"/>
    <property type="match status" value="1"/>
</dbReference>
<evidence type="ECO:0000255" key="1">
    <source>
        <dbReference type="HAMAP-Rule" id="MF_01857"/>
    </source>
</evidence>
<evidence type="ECO:0000305" key="2"/>
<organism>
    <name type="scientific">Vibrio cholerae serotype O1 (strain ATCC 39315 / El Tor Inaba N16961)</name>
    <dbReference type="NCBI Taxonomy" id="243277"/>
    <lineage>
        <taxon>Bacteria</taxon>
        <taxon>Pseudomonadati</taxon>
        <taxon>Pseudomonadota</taxon>
        <taxon>Gammaproteobacteria</taxon>
        <taxon>Vibrionales</taxon>
        <taxon>Vibrionaceae</taxon>
        <taxon>Vibrio</taxon>
    </lineage>
</organism>
<accession>Q9KSA5</accession>
<feature type="chain" id="PRO_0000366271" description="Ribosomal RNA large subunit methyltransferase I">
    <location>
        <begin position="1"/>
        <end position="397"/>
    </location>
</feature>
<feature type="domain" description="PUA" evidence="1">
    <location>
        <begin position="2"/>
        <end position="78"/>
    </location>
</feature>
<proteinExistence type="inferred from homology"/>
<keyword id="KW-0963">Cytoplasm</keyword>
<keyword id="KW-0489">Methyltransferase</keyword>
<keyword id="KW-1185">Reference proteome</keyword>
<keyword id="KW-0694">RNA-binding</keyword>
<keyword id="KW-0698">rRNA processing</keyword>
<keyword id="KW-0949">S-adenosyl-L-methionine</keyword>
<keyword id="KW-0808">Transferase</keyword>
<sequence length="397" mass="44599">MTPAIYLVKGRDKSLRRKHPWVFSRGISKVEGTPKLGETVDVYSFEGKWLAKAAYSPHSQITARVWSFEQEPIDRDFFIKRIEQAQLLRNDIIERDGLTGYRLIAAESDGLPGITIDKYQDYLVCQLLSAGAEYQKQTLVEALLHCFPECHIYERSDVAVRKKEGLDERVGVLHGELPPKSVVIEENGVKISVDIVGGHKTGFYLDQRDSRFQSMKYVKEKEVLNCFSYTGGFGLYALKGGAKRVINADVSQPALDTAKFNAELNGFDISKKRAVFLNADVFKLLREYRDQGTRFDVVVMDPPKFAESKAQLDGACRGYKDINMLAMQILNPGGTLLTYSCSGLMDQVLFQKIIADAALDAGRDVKFVERFEQAADHPTDTAYPEGFYLKGFACKVL</sequence>
<reference key="1">
    <citation type="journal article" date="2000" name="Nature">
        <title>DNA sequence of both chromosomes of the cholera pathogen Vibrio cholerae.</title>
        <authorList>
            <person name="Heidelberg J.F."/>
            <person name="Eisen J.A."/>
            <person name="Nelson W.C."/>
            <person name="Clayton R.A."/>
            <person name="Gwinn M.L."/>
            <person name="Dodson R.J."/>
            <person name="Haft D.H."/>
            <person name="Hickey E.K."/>
            <person name="Peterson J.D."/>
            <person name="Umayam L.A."/>
            <person name="Gill S.R."/>
            <person name="Nelson K.E."/>
            <person name="Read T.D."/>
            <person name="Tettelin H."/>
            <person name="Richardson D.L."/>
            <person name="Ermolaeva M.D."/>
            <person name="Vamathevan J.J."/>
            <person name="Bass S."/>
            <person name="Qin H."/>
            <person name="Dragoi I."/>
            <person name="Sellers P."/>
            <person name="McDonald L.A."/>
            <person name="Utterback T.R."/>
            <person name="Fleischmann R.D."/>
            <person name="Nierman W.C."/>
            <person name="White O."/>
            <person name="Salzberg S.L."/>
            <person name="Smith H.O."/>
            <person name="Colwell R.R."/>
            <person name="Mekalanos J.J."/>
            <person name="Venter J.C."/>
            <person name="Fraser C.M."/>
        </authorList>
    </citation>
    <scope>NUCLEOTIDE SEQUENCE [LARGE SCALE GENOMIC DNA]</scope>
    <source>
        <strain>ATCC 39315 / El Tor Inaba N16961</strain>
    </source>
</reference>